<keyword id="KW-0002">3D-structure</keyword>
<keyword id="KW-0903">Direct protein sequencing</keyword>
<keyword id="KW-0235">DNA replication</keyword>
<keyword id="KW-0239">DNA-directed DNA polymerase</keyword>
<keyword id="KW-0548">Nucleotidyltransferase</keyword>
<keyword id="KW-1185">Reference proteome</keyword>
<keyword id="KW-0808">Transferase</keyword>
<protein>
    <recommendedName>
        <fullName>DNA polymerase III subunit theta</fullName>
        <ecNumber>2.7.7.7</ecNumber>
    </recommendedName>
</protein>
<sequence>MLKNLAKLDQTEMDKVNVDLAAAGVAFKERYNMPVIAEAVEREQPEHLRSWFRERLIAHRLASVNLSRLPYEPKLK</sequence>
<proteinExistence type="evidence at protein level"/>
<dbReference type="EC" id="2.7.7.7"/>
<dbReference type="EMBL" id="L04572">
    <property type="protein sequence ID" value="AAA23697.1"/>
    <property type="molecule type" value="Genomic_DNA"/>
</dbReference>
<dbReference type="EMBL" id="L05381">
    <property type="protein sequence ID" value="AAA23982.1"/>
    <property type="molecule type" value="Genomic_DNA"/>
</dbReference>
<dbReference type="EMBL" id="U00096">
    <property type="protein sequence ID" value="AAC74912.1"/>
    <property type="molecule type" value="Genomic_DNA"/>
</dbReference>
<dbReference type="EMBL" id="AP009048">
    <property type="protein sequence ID" value="BAA15650.1"/>
    <property type="molecule type" value="Genomic_DNA"/>
</dbReference>
<dbReference type="PIR" id="S34951">
    <property type="entry name" value="S34951"/>
</dbReference>
<dbReference type="RefSeq" id="NP_416356.1">
    <property type="nucleotide sequence ID" value="NC_000913.3"/>
</dbReference>
<dbReference type="RefSeq" id="WP_000916763.1">
    <property type="nucleotide sequence ID" value="NZ_STEB01000009.1"/>
</dbReference>
<dbReference type="PDB" id="1DU2">
    <property type="method" value="NMR"/>
    <property type="chains" value="A=1-76"/>
</dbReference>
<dbReference type="PDB" id="2AE9">
    <property type="method" value="NMR"/>
    <property type="chains" value="A=1-76"/>
</dbReference>
<dbReference type="PDB" id="2AXD">
    <property type="method" value="NMR"/>
    <property type="chains" value="S=1-76"/>
</dbReference>
<dbReference type="PDB" id="2XY8">
    <property type="method" value="NMR"/>
    <property type="chains" value="B=1-76"/>
</dbReference>
<dbReference type="PDB" id="5M1S">
    <property type="method" value="EM"/>
    <property type="resolution" value="6.70 A"/>
    <property type="chains" value="F=10-65"/>
</dbReference>
<dbReference type="PDBsum" id="1DU2"/>
<dbReference type="PDBsum" id="2AE9"/>
<dbReference type="PDBsum" id="2AXD"/>
<dbReference type="PDBsum" id="2XY8"/>
<dbReference type="PDBsum" id="5M1S"/>
<dbReference type="BMRB" id="P0ABS8"/>
<dbReference type="EMDB" id="EMD-4141"/>
<dbReference type="SMR" id="P0ABS8"/>
<dbReference type="BioGRID" id="4260361">
    <property type="interactions" value="47"/>
</dbReference>
<dbReference type="BioGRID" id="851789">
    <property type="interactions" value="1"/>
</dbReference>
<dbReference type="ComplexPortal" id="CPX-1925">
    <property type="entry name" value="DNA polymerase III core complex"/>
</dbReference>
<dbReference type="DIP" id="DIP-39982N"/>
<dbReference type="FunCoup" id="P0ABS8">
    <property type="interactions" value="117"/>
</dbReference>
<dbReference type="IntAct" id="P0ABS8">
    <property type="interactions" value="29"/>
</dbReference>
<dbReference type="MINT" id="P0ABS8"/>
<dbReference type="STRING" id="511145.b1842"/>
<dbReference type="jPOST" id="P0ABS8"/>
<dbReference type="PaxDb" id="511145-b1842"/>
<dbReference type="EnsemblBacteria" id="AAC74912">
    <property type="protein sequence ID" value="AAC74912"/>
    <property type="gene ID" value="b1842"/>
</dbReference>
<dbReference type="GeneID" id="93776109"/>
<dbReference type="GeneID" id="947471"/>
<dbReference type="KEGG" id="ecj:JW1831"/>
<dbReference type="KEGG" id="eco:b1842"/>
<dbReference type="KEGG" id="ecoc:C3026_10495"/>
<dbReference type="PATRIC" id="fig|511145.12.peg.1920"/>
<dbReference type="EchoBASE" id="EB1468"/>
<dbReference type="eggNOG" id="ENOG5032S2T">
    <property type="taxonomic scope" value="Bacteria"/>
</dbReference>
<dbReference type="HOGENOM" id="CLU_176900_0_0_6"/>
<dbReference type="InParanoid" id="P0ABS8"/>
<dbReference type="OMA" id="FRERYNM"/>
<dbReference type="OrthoDB" id="6506252at2"/>
<dbReference type="PhylomeDB" id="P0ABS8"/>
<dbReference type="BioCyc" id="EcoCyc:EG11505-MONOMER"/>
<dbReference type="BioCyc" id="MetaCyc:EG11505-MONOMER"/>
<dbReference type="EvolutionaryTrace" id="P0ABS8"/>
<dbReference type="PRO" id="PR:P0ABS8"/>
<dbReference type="Proteomes" id="UP000000625">
    <property type="component" value="Chromosome"/>
</dbReference>
<dbReference type="GO" id="GO:0005829">
    <property type="term" value="C:cytosol"/>
    <property type="evidence" value="ECO:0000314"/>
    <property type="project" value="EcoCyc"/>
</dbReference>
<dbReference type="GO" id="GO:0009360">
    <property type="term" value="C:DNA polymerase III complex"/>
    <property type="evidence" value="ECO:0000303"/>
    <property type="project" value="ComplexPortal"/>
</dbReference>
<dbReference type="GO" id="GO:0044776">
    <property type="term" value="C:DNA polymerase III, core complex"/>
    <property type="evidence" value="ECO:0000314"/>
    <property type="project" value="EcoCyc"/>
</dbReference>
<dbReference type="GO" id="GO:0030894">
    <property type="term" value="C:replisome"/>
    <property type="evidence" value="ECO:0000303"/>
    <property type="project" value="ComplexPortal"/>
</dbReference>
<dbReference type="GO" id="GO:0003677">
    <property type="term" value="F:DNA binding"/>
    <property type="evidence" value="ECO:0007669"/>
    <property type="project" value="InterPro"/>
</dbReference>
<dbReference type="GO" id="GO:0003887">
    <property type="term" value="F:DNA-directed DNA polymerase activity"/>
    <property type="evidence" value="ECO:0000314"/>
    <property type="project" value="EcoCyc"/>
</dbReference>
<dbReference type="GO" id="GO:0006261">
    <property type="term" value="P:DNA-templated DNA replication"/>
    <property type="evidence" value="ECO:0000303"/>
    <property type="project" value="ComplexPortal"/>
</dbReference>
<dbReference type="GO" id="GO:0006273">
    <property type="term" value="P:lagging strand elongation"/>
    <property type="evidence" value="ECO:0000314"/>
    <property type="project" value="ComplexPortal"/>
</dbReference>
<dbReference type="GO" id="GO:0006272">
    <property type="term" value="P:leading strand elongation"/>
    <property type="evidence" value="ECO:0000314"/>
    <property type="project" value="ComplexPortal"/>
</dbReference>
<dbReference type="FunFam" id="1.20.58.250:FF:000001">
    <property type="entry name" value="DNA polymerase III, theta subunit"/>
    <property type="match status" value="1"/>
</dbReference>
<dbReference type="Gene3D" id="1.20.58.250">
    <property type="entry name" value="DNA polymerase III-theta"/>
    <property type="match status" value="1"/>
</dbReference>
<dbReference type="InterPro" id="IPR009052">
    <property type="entry name" value="DNA_pol_III_theta_bac"/>
</dbReference>
<dbReference type="InterPro" id="IPR036745">
    <property type="entry name" value="PolIII_theta_sf"/>
</dbReference>
<dbReference type="NCBIfam" id="NF008207">
    <property type="entry name" value="PRK10969.1"/>
    <property type="match status" value="1"/>
</dbReference>
<dbReference type="Pfam" id="PF06440">
    <property type="entry name" value="DNA_pol3_theta"/>
    <property type="match status" value="1"/>
</dbReference>
<dbReference type="SUPFAM" id="SSF46575">
    <property type="entry name" value="DNA polymerase III theta subunit-like"/>
    <property type="match status" value="1"/>
</dbReference>
<feature type="chain" id="PRO_0000105522" description="DNA polymerase III subunit theta">
    <location>
        <begin position="1"/>
        <end position="76"/>
    </location>
</feature>
<feature type="helix" evidence="3">
    <location>
        <begin position="5"/>
        <end position="8"/>
    </location>
</feature>
<feature type="helix" evidence="1">
    <location>
        <begin position="11"/>
        <end position="21"/>
    </location>
</feature>
<feature type="strand" evidence="1">
    <location>
        <begin position="23"/>
        <end position="25"/>
    </location>
</feature>
<feature type="helix" evidence="3">
    <location>
        <begin position="27"/>
        <end position="30"/>
    </location>
</feature>
<feature type="helix" evidence="1">
    <location>
        <begin position="38"/>
        <end position="43"/>
    </location>
</feature>
<feature type="helix" evidence="1">
    <location>
        <begin position="47"/>
        <end position="53"/>
    </location>
</feature>
<feature type="helix" evidence="1">
    <location>
        <begin position="54"/>
        <end position="56"/>
    </location>
</feature>
<feature type="strand" evidence="1">
    <location>
        <begin position="64"/>
        <end position="66"/>
    </location>
</feature>
<feature type="strand" evidence="2">
    <location>
        <begin position="67"/>
        <end position="69"/>
    </location>
</feature>
<gene>
    <name type="primary">holE</name>
    <name type="ordered locus">b1842</name>
    <name type="ordered locus">JW1831</name>
</gene>
<reference key="1">
    <citation type="journal article" date="1993" name="J. Biol. Chem.">
        <title>DNA polymerase III accessory proteins. V. Theta encoded by holE.</title>
        <authorList>
            <person name="Studwell-Vaughan P.S."/>
            <person name="O'Donnell M."/>
        </authorList>
    </citation>
    <scope>NUCLEOTIDE SEQUENCE [GENOMIC DNA]</scope>
    <source>
        <strain>K12</strain>
    </source>
</reference>
<reference key="2">
    <citation type="journal article" date="1993" name="Nucleic Acids Res.">
        <title>Isolation, sequencing and overexpression of the gene encoding the theta subunit of DNA polymerase III holoenzyme.</title>
        <authorList>
            <person name="Carter J.R."/>
            <person name="Franden M.A."/>
            <person name="Aebersold R.H."/>
            <person name="Kim D.R."/>
            <person name="McHenry C.S."/>
        </authorList>
    </citation>
    <scope>NUCLEOTIDE SEQUENCE [GENOMIC DNA]</scope>
    <scope>PROTEIN SEQUENCE OF 1-23; 44-49 AND 69-73</scope>
    <source>
        <strain>K12 / MG1655 / ATCC 47076</strain>
    </source>
</reference>
<reference key="3">
    <citation type="journal article" date="1996" name="DNA Res.">
        <title>A 460-kb DNA sequence of the Escherichia coli K-12 genome corresponding to the 40.1-50.0 min region on the linkage map.</title>
        <authorList>
            <person name="Itoh T."/>
            <person name="Aiba H."/>
            <person name="Baba T."/>
            <person name="Fujita K."/>
            <person name="Hayashi K."/>
            <person name="Inada T."/>
            <person name="Isono K."/>
            <person name="Kasai H."/>
            <person name="Kimura S."/>
            <person name="Kitakawa M."/>
            <person name="Kitagawa M."/>
            <person name="Makino K."/>
            <person name="Miki T."/>
            <person name="Mizobuchi K."/>
            <person name="Mori H."/>
            <person name="Mori T."/>
            <person name="Motomura K."/>
            <person name="Nakade S."/>
            <person name="Nakamura Y."/>
            <person name="Nashimoto H."/>
            <person name="Nishio Y."/>
            <person name="Oshima T."/>
            <person name="Saito N."/>
            <person name="Sampei G."/>
            <person name="Seki Y."/>
            <person name="Sivasundaram S."/>
            <person name="Tagami H."/>
            <person name="Takeda J."/>
            <person name="Takemoto K."/>
            <person name="Wada C."/>
            <person name="Yamamoto Y."/>
            <person name="Horiuchi T."/>
        </authorList>
    </citation>
    <scope>NUCLEOTIDE SEQUENCE [LARGE SCALE GENOMIC DNA]</scope>
    <source>
        <strain>K12 / W3110 / ATCC 27325 / DSM 5911</strain>
    </source>
</reference>
<reference key="4">
    <citation type="journal article" date="1997" name="Science">
        <title>The complete genome sequence of Escherichia coli K-12.</title>
        <authorList>
            <person name="Blattner F.R."/>
            <person name="Plunkett G. III"/>
            <person name="Bloch C.A."/>
            <person name="Perna N.T."/>
            <person name="Burland V."/>
            <person name="Riley M."/>
            <person name="Collado-Vides J."/>
            <person name="Glasner J.D."/>
            <person name="Rode C.K."/>
            <person name="Mayhew G.F."/>
            <person name="Gregor J."/>
            <person name="Davis N.W."/>
            <person name="Kirkpatrick H.A."/>
            <person name="Goeden M.A."/>
            <person name="Rose D.J."/>
            <person name="Mau B."/>
            <person name="Shao Y."/>
        </authorList>
    </citation>
    <scope>NUCLEOTIDE SEQUENCE [LARGE SCALE GENOMIC DNA]</scope>
    <source>
        <strain>K12 / MG1655 / ATCC 47076</strain>
    </source>
</reference>
<reference key="5">
    <citation type="journal article" date="2006" name="Mol. Syst. Biol.">
        <title>Highly accurate genome sequences of Escherichia coli K-12 strains MG1655 and W3110.</title>
        <authorList>
            <person name="Hayashi K."/>
            <person name="Morooka N."/>
            <person name="Yamamoto Y."/>
            <person name="Fujita K."/>
            <person name="Isono K."/>
            <person name="Choi S."/>
            <person name="Ohtsubo E."/>
            <person name="Baba T."/>
            <person name="Wanner B.L."/>
            <person name="Mori H."/>
            <person name="Horiuchi T."/>
        </authorList>
    </citation>
    <scope>NUCLEOTIDE SEQUENCE [LARGE SCALE GENOMIC DNA]</scope>
    <source>
        <strain>K12 / W3110 / ATCC 27325 / DSM 5911</strain>
    </source>
</reference>
<reference key="6">
    <citation type="journal article" date="1992" name="Bioessays">
        <title>Accessory protein function in the DNA polymerase III holoenzyme from E. coli.</title>
        <authorList>
            <person name="O'Donnell M."/>
        </authorList>
    </citation>
    <scope>REVIEW</scope>
</reference>
<name>HOLE_ECOLI</name>
<organism>
    <name type="scientific">Escherichia coli (strain K12)</name>
    <dbReference type="NCBI Taxonomy" id="83333"/>
    <lineage>
        <taxon>Bacteria</taxon>
        <taxon>Pseudomonadati</taxon>
        <taxon>Pseudomonadota</taxon>
        <taxon>Gammaproteobacteria</taxon>
        <taxon>Enterobacterales</taxon>
        <taxon>Enterobacteriaceae</taxon>
        <taxon>Escherichia</taxon>
    </lineage>
</organism>
<accession>P0ABS8</accession>
<accession>P28689</accession>
<evidence type="ECO:0007829" key="1">
    <source>
        <dbReference type="PDB" id="1DU2"/>
    </source>
</evidence>
<evidence type="ECO:0007829" key="2">
    <source>
        <dbReference type="PDB" id="2AE9"/>
    </source>
</evidence>
<evidence type="ECO:0007829" key="3">
    <source>
        <dbReference type="PDB" id="2AXD"/>
    </source>
</evidence>
<comment type="function">
    <text>DNA polymerase III is a complex, multichain enzyme responsible for most of the replicative synthesis in bacteria. This DNA polymerase also exhibits 3' to 5' exonuclease activity.</text>
</comment>
<comment type="function">
    <text>The exact function of the theta subunit is unknown.</text>
</comment>
<comment type="catalytic activity">
    <reaction>
        <text>DNA(n) + a 2'-deoxyribonucleoside 5'-triphosphate = DNA(n+1) + diphosphate</text>
        <dbReference type="Rhea" id="RHEA:22508"/>
        <dbReference type="Rhea" id="RHEA-COMP:17339"/>
        <dbReference type="Rhea" id="RHEA-COMP:17340"/>
        <dbReference type="ChEBI" id="CHEBI:33019"/>
        <dbReference type="ChEBI" id="CHEBI:61560"/>
        <dbReference type="ChEBI" id="CHEBI:173112"/>
        <dbReference type="EC" id="2.7.7.7"/>
    </reaction>
</comment>
<comment type="subunit">
    <text>The DNA polymerase holoenzyme is a complex that contains 10 different types of subunits. These subunits are organized into 3 functionally essential subassemblies: the pol III core, the beta sliding clamp processivity factor and the clamp-loading complex. The pol III core (subunits alpha,epsilon and theta) contains the polymerase and the 3'-5' exonuclease proofreading activities. The polymerase is tethered to the template via the sliding clamp processivity factor. The clamp-loading complex assembles the beta processivity factor onto the primer template and plays a central role in the organization and communication at the replication fork. This complex contains delta, delta', psi and chi, and copies of either or both of two different DnaX proteins, gamma and tau. The composition of the holoenzyme is, therefore: (alpha,epsilon,theta)[2]-(gamma/tau)[3]-delta,delta', psi,chi-beta[4].</text>
</comment>
<comment type="interaction">
    <interactant intactId="EBI-549182">
        <id>P0ABS8</id>
    </interactant>
    <interactant intactId="EBI-549131">
        <id>P03007</id>
        <label>dnaQ</label>
    </interactant>
    <organismsDiffer>false</organismsDiffer>
    <experiments>13</experiments>
</comment>